<reference key="1">
    <citation type="journal article" date="2009" name="J. Bacteriol.">
        <title>Genomic sequencing reveals regulatory mutations and recombinational events in the widely used MC4100 lineage of Escherichia coli K-12.</title>
        <authorList>
            <person name="Ferenci T."/>
            <person name="Zhou Z."/>
            <person name="Betteridge T."/>
            <person name="Ren Y."/>
            <person name="Liu Y."/>
            <person name="Feng L."/>
            <person name="Reeves P.R."/>
            <person name="Wang L."/>
        </authorList>
    </citation>
    <scope>NUCLEOTIDE SEQUENCE [LARGE SCALE GENOMIC DNA]</scope>
    <source>
        <strain>K12 / MC4100 / BW2952</strain>
    </source>
</reference>
<organism>
    <name type="scientific">Escherichia coli (strain K12 / MC4100 / BW2952)</name>
    <dbReference type="NCBI Taxonomy" id="595496"/>
    <lineage>
        <taxon>Bacteria</taxon>
        <taxon>Pseudomonadati</taxon>
        <taxon>Pseudomonadota</taxon>
        <taxon>Gammaproteobacteria</taxon>
        <taxon>Enterobacterales</taxon>
        <taxon>Enterobacteriaceae</taxon>
        <taxon>Escherichia</taxon>
    </lineage>
</organism>
<name>TOLB_ECOBW</name>
<evidence type="ECO:0000255" key="1">
    <source>
        <dbReference type="HAMAP-Rule" id="MF_00671"/>
    </source>
</evidence>
<sequence length="430" mass="45956">MKQALRVAFGFLILWASVLHAEVRIVIDSGVDSGRPIGVVPFQWAGPGAAPEDIGGIVAADLRNSGKFNPLDRARLPQQPGSAQEVQPAAWSALGIDAVVVGQVTPNPDGSYNVAYQLVDTGGAPGTVLAQNSYKVNKQWLRYAGHTASDEVFEKLTGIKGAFRTRIAYVVQTNGGQFPYELRVSDYDGYNQFVVHRSPQPLMSPAWSPDGSKLAYVTFESGRSALVIQTLANGAVRQVASFPRHNGAPAFSPDGSKLAFALSKTGSLNLYVMDLASGQIRQVTDGRSNNTEPTWFPDSQNLAFTSDQAGRPQVYKVNINGGAPQRITWEGSQNQDADVSSDGKFMVMVSSNGGQQHIAKQDLATGGVQVLSSTFLDETPSLAPNGTMVIYSSSQGMGSVLNLVSTDGRFKARLPATDGQVKFPAWSPYL</sequence>
<keyword id="KW-0131">Cell cycle</keyword>
<keyword id="KW-0132">Cell division</keyword>
<keyword id="KW-0574">Periplasm</keyword>
<keyword id="KW-0732">Signal</keyword>
<comment type="function">
    <text evidence="1">Part of the Tol-Pal system, which plays a role in outer membrane invagination during cell division and is important for maintaining outer membrane integrity. TolB occupies a key intermediary position in the Tol-Pal system because it communicates directly with both membrane-embedded components, Pal in the outer membrane and TolA in the inner membrane.</text>
</comment>
<comment type="subunit">
    <text evidence="1">The Tol-Pal system is composed of five core proteins: the inner membrane proteins TolA, TolQ and TolR, the periplasmic protein TolB and the outer membrane protein Pal. They form a network linking the inner and outer membranes and the peptidoglycan layer.</text>
</comment>
<comment type="subcellular location">
    <subcellularLocation>
        <location evidence="1">Periplasm</location>
    </subcellularLocation>
</comment>
<comment type="similarity">
    <text evidence="1">Belongs to the TolB family.</text>
</comment>
<accession>C4ZWL5</accession>
<dbReference type="EMBL" id="CP001396">
    <property type="protein sequence ID" value="ACR64002.1"/>
    <property type="molecule type" value="Genomic_DNA"/>
</dbReference>
<dbReference type="RefSeq" id="WP_001295307.1">
    <property type="nucleotide sequence ID" value="NC_012759.1"/>
</dbReference>
<dbReference type="SMR" id="C4ZWL5"/>
<dbReference type="BioGRID" id="4316763">
    <property type="interactions" value="2"/>
</dbReference>
<dbReference type="GeneID" id="93776744"/>
<dbReference type="KEGG" id="ebw:BWG_0599"/>
<dbReference type="HOGENOM" id="CLU_047123_0_0_6"/>
<dbReference type="GO" id="GO:0042597">
    <property type="term" value="C:periplasmic space"/>
    <property type="evidence" value="ECO:0007669"/>
    <property type="project" value="UniProtKB-SubCell"/>
</dbReference>
<dbReference type="GO" id="GO:0051301">
    <property type="term" value="P:cell division"/>
    <property type="evidence" value="ECO:0007669"/>
    <property type="project" value="UniProtKB-UniRule"/>
</dbReference>
<dbReference type="GO" id="GO:0017038">
    <property type="term" value="P:protein import"/>
    <property type="evidence" value="ECO:0007669"/>
    <property type="project" value="InterPro"/>
</dbReference>
<dbReference type="FunFam" id="2.120.10.30:FF:000022">
    <property type="entry name" value="Tol-Pal system protein TolB"/>
    <property type="match status" value="1"/>
</dbReference>
<dbReference type="FunFam" id="3.40.50.10070:FF:000001">
    <property type="entry name" value="Tol-Pal system protein TolB"/>
    <property type="match status" value="1"/>
</dbReference>
<dbReference type="Gene3D" id="2.120.10.30">
    <property type="entry name" value="TolB, C-terminal domain"/>
    <property type="match status" value="1"/>
</dbReference>
<dbReference type="Gene3D" id="3.40.50.10070">
    <property type="entry name" value="TolB, N-terminal domain"/>
    <property type="match status" value="1"/>
</dbReference>
<dbReference type="HAMAP" id="MF_00671">
    <property type="entry name" value="TolB"/>
    <property type="match status" value="1"/>
</dbReference>
<dbReference type="InterPro" id="IPR011042">
    <property type="entry name" value="6-blade_b-propeller_TolB-like"/>
</dbReference>
<dbReference type="InterPro" id="IPR011659">
    <property type="entry name" value="PD40"/>
</dbReference>
<dbReference type="InterPro" id="IPR014167">
    <property type="entry name" value="Tol-Pal_TolB"/>
</dbReference>
<dbReference type="InterPro" id="IPR007195">
    <property type="entry name" value="TolB_N"/>
</dbReference>
<dbReference type="NCBIfam" id="TIGR02800">
    <property type="entry name" value="propeller_TolB"/>
    <property type="match status" value="1"/>
</dbReference>
<dbReference type="PANTHER" id="PTHR36842:SF1">
    <property type="entry name" value="PROTEIN TOLB"/>
    <property type="match status" value="1"/>
</dbReference>
<dbReference type="PANTHER" id="PTHR36842">
    <property type="entry name" value="PROTEIN TOLB HOMOLOG"/>
    <property type="match status" value="1"/>
</dbReference>
<dbReference type="Pfam" id="PF07676">
    <property type="entry name" value="PD40"/>
    <property type="match status" value="4"/>
</dbReference>
<dbReference type="Pfam" id="PF04052">
    <property type="entry name" value="TolB_N"/>
    <property type="match status" value="1"/>
</dbReference>
<dbReference type="SUPFAM" id="SSF52964">
    <property type="entry name" value="TolB, N-terminal domain"/>
    <property type="match status" value="1"/>
</dbReference>
<dbReference type="SUPFAM" id="SSF69304">
    <property type="entry name" value="Tricorn protease N-terminal domain"/>
    <property type="match status" value="1"/>
</dbReference>
<gene>
    <name evidence="1" type="primary">tolB</name>
    <name type="ordered locus">BWG_0599</name>
</gene>
<proteinExistence type="inferred from homology"/>
<protein>
    <recommendedName>
        <fullName evidence="1">Tol-Pal system protein TolB</fullName>
    </recommendedName>
</protein>
<feature type="signal peptide" evidence="1">
    <location>
        <begin position="1"/>
        <end position="21"/>
    </location>
</feature>
<feature type="chain" id="PRO_1000212507" description="Tol-Pal system protein TolB" evidence="1">
    <location>
        <begin position="22"/>
        <end position="430"/>
    </location>
</feature>